<gene>
    <name type="primary">EN1</name>
</gene>
<proteinExistence type="evidence at protein level"/>
<dbReference type="EMBL" id="L12699">
    <property type="protein sequence ID" value="AAA53502.2"/>
    <property type="molecule type" value="Genomic_DNA"/>
</dbReference>
<dbReference type="EMBL" id="L12698">
    <property type="protein sequence ID" value="AAA53502.2"/>
    <property type="status" value="JOINED"/>
    <property type="molecule type" value="Genomic_DNA"/>
</dbReference>
<dbReference type="EMBL" id="AC012665">
    <property type="protein sequence ID" value="AAX88967.1"/>
    <property type="molecule type" value="Genomic_DNA"/>
</dbReference>
<dbReference type="EMBL" id="CH471103">
    <property type="protein sequence ID" value="EAW95206.1"/>
    <property type="molecule type" value="Genomic_DNA"/>
</dbReference>
<dbReference type="CCDS" id="CCDS2123.1"/>
<dbReference type="PIR" id="B48423">
    <property type="entry name" value="B48423"/>
</dbReference>
<dbReference type="RefSeq" id="NP_001417.3">
    <property type="nucleotide sequence ID" value="NM_001426.3"/>
</dbReference>
<dbReference type="SMR" id="Q05925"/>
<dbReference type="BioGRID" id="108334">
    <property type="interactions" value="136"/>
</dbReference>
<dbReference type="FunCoup" id="Q05925">
    <property type="interactions" value="1011"/>
</dbReference>
<dbReference type="IntAct" id="Q05925">
    <property type="interactions" value="107"/>
</dbReference>
<dbReference type="STRING" id="9606.ENSP00000295206"/>
<dbReference type="GlyGen" id="Q05925">
    <property type="glycosylation" value="1 site"/>
</dbReference>
<dbReference type="iPTMnet" id="Q05925"/>
<dbReference type="PhosphoSitePlus" id="Q05925"/>
<dbReference type="BioMuta" id="EN1"/>
<dbReference type="DMDM" id="215274149"/>
<dbReference type="jPOST" id="Q05925"/>
<dbReference type="MassIVE" id="Q05925"/>
<dbReference type="PaxDb" id="9606-ENSP00000295206"/>
<dbReference type="PeptideAtlas" id="Q05925"/>
<dbReference type="ProteomicsDB" id="58357"/>
<dbReference type="Antibodypedia" id="33365">
    <property type="antibodies" value="250 antibodies from 30 providers"/>
</dbReference>
<dbReference type="DNASU" id="2019"/>
<dbReference type="Ensembl" id="ENST00000295206.7">
    <property type="protein sequence ID" value="ENSP00000295206.5"/>
    <property type="gene ID" value="ENSG00000163064.7"/>
</dbReference>
<dbReference type="GeneID" id="2019"/>
<dbReference type="KEGG" id="hsa:2019"/>
<dbReference type="MANE-Select" id="ENST00000295206.7">
    <property type="protein sequence ID" value="ENSP00000295206.5"/>
    <property type="RefSeq nucleotide sequence ID" value="NM_001426.4"/>
    <property type="RefSeq protein sequence ID" value="NP_001417.3"/>
</dbReference>
<dbReference type="UCSC" id="uc002tlm.4">
    <property type="organism name" value="human"/>
</dbReference>
<dbReference type="AGR" id="HGNC:3342"/>
<dbReference type="CTD" id="2019"/>
<dbReference type="DisGeNET" id="2019"/>
<dbReference type="GeneCards" id="EN1"/>
<dbReference type="HGNC" id="HGNC:3342">
    <property type="gene designation" value="EN1"/>
</dbReference>
<dbReference type="HPA" id="ENSG00000163064">
    <property type="expression patterns" value="Group enriched (adipose tissue, brain, skeletal muscle, skin)"/>
</dbReference>
<dbReference type="MalaCards" id="EN1"/>
<dbReference type="MIM" id="131290">
    <property type="type" value="gene"/>
</dbReference>
<dbReference type="MIM" id="619217">
    <property type="type" value="phenotype"/>
</dbReference>
<dbReference type="MIM" id="619218">
    <property type="type" value="phenotype"/>
</dbReference>
<dbReference type="neXtProt" id="NX_Q05925"/>
<dbReference type="OpenTargets" id="ENSG00000163064"/>
<dbReference type="PharmGKB" id="PA27779"/>
<dbReference type="VEuPathDB" id="HostDB:ENSG00000163064"/>
<dbReference type="eggNOG" id="KOG0493">
    <property type="taxonomic scope" value="Eukaryota"/>
</dbReference>
<dbReference type="GeneTree" id="ENSGT00940000160811"/>
<dbReference type="HOGENOM" id="CLU_051739_0_1_1"/>
<dbReference type="InParanoid" id="Q05925"/>
<dbReference type="OMA" id="CKKEQQQ"/>
<dbReference type="OrthoDB" id="6159439at2759"/>
<dbReference type="PAN-GO" id="Q05925">
    <property type="GO annotations" value="5 GO annotations based on evolutionary models"/>
</dbReference>
<dbReference type="PhylomeDB" id="Q05925"/>
<dbReference type="TreeFam" id="TF106461"/>
<dbReference type="PathwayCommons" id="Q05925"/>
<dbReference type="SignaLink" id="Q05925"/>
<dbReference type="SIGNOR" id="Q05925"/>
<dbReference type="BioGRID-ORCS" id="2019">
    <property type="hits" value="6 hits in 1173 CRISPR screens"/>
</dbReference>
<dbReference type="GeneWiki" id="EN1_(gene)"/>
<dbReference type="GenomeRNAi" id="2019"/>
<dbReference type="Pharos" id="Q05925">
    <property type="development level" value="Tbio"/>
</dbReference>
<dbReference type="PRO" id="PR:Q05925"/>
<dbReference type="Proteomes" id="UP000005640">
    <property type="component" value="Chromosome 2"/>
</dbReference>
<dbReference type="RNAct" id="Q05925">
    <property type="molecule type" value="protein"/>
</dbReference>
<dbReference type="Bgee" id="ENSG00000163064">
    <property type="expression patterns" value="Expressed in substantia nigra pars reticulata and 58 other cell types or tissues"/>
</dbReference>
<dbReference type="GO" id="GO:0000785">
    <property type="term" value="C:chromatin"/>
    <property type="evidence" value="ECO:0000247"/>
    <property type="project" value="NTNU_SB"/>
</dbReference>
<dbReference type="GO" id="GO:0005634">
    <property type="term" value="C:nucleus"/>
    <property type="evidence" value="ECO:0000314"/>
    <property type="project" value="ParkinsonsUK-UCL"/>
</dbReference>
<dbReference type="GO" id="GO:0000981">
    <property type="term" value="F:DNA-binding transcription factor activity, RNA polymerase II-specific"/>
    <property type="evidence" value="ECO:0000247"/>
    <property type="project" value="NTNU_SB"/>
</dbReference>
<dbReference type="GO" id="GO:0001227">
    <property type="term" value="F:DNA-binding transcription repressor activity, RNA polymerase II-specific"/>
    <property type="evidence" value="ECO:0000314"/>
    <property type="project" value="NTNU_SB"/>
</dbReference>
<dbReference type="GO" id="GO:0000978">
    <property type="term" value="F:RNA polymerase II cis-regulatory region sequence-specific DNA binding"/>
    <property type="evidence" value="ECO:0000314"/>
    <property type="project" value="NTNU_SB"/>
</dbReference>
<dbReference type="GO" id="GO:1990837">
    <property type="term" value="F:sequence-specific double-stranded DNA binding"/>
    <property type="evidence" value="ECO:0000314"/>
    <property type="project" value="ARUK-UCL"/>
</dbReference>
<dbReference type="GO" id="GO:0008344">
    <property type="term" value="P:adult locomotory behavior"/>
    <property type="evidence" value="ECO:0007669"/>
    <property type="project" value="Ensembl"/>
</dbReference>
<dbReference type="GO" id="GO:0009653">
    <property type="term" value="P:anatomical structure morphogenesis"/>
    <property type="evidence" value="ECO:0000304"/>
    <property type="project" value="ProtInc"/>
</dbReference>
<dbReference type="GO" id="GO:0021953">
    <property type="term" value="P:central nervous system neuron differentiation"/>
    <property type="evidence" value="ECO:0007669"/>
    <property type="project" value="Ensembl"/>
</dbReference>
<dbReference type="GO" id="GO:0021549">
    <property type="term" value="P:cerebellum development"/>
    <property type="evidence" value="ECO:0007669"/>
    <property type="project" value="Ensembl"/>
</dbReference>
<dbReference type="GO" id="GO:0071542">
    <property type="term" value="P:dopaminergic neuron differentiation"/>
    <property type="evidence" value="ECO:0000304"/>
    <property type="project" value="ParkinsonsUK-UCL"/>
</dbReference>
<dbReference type="GO" id="GO:0009953">
    <property type="term" value="P:dorsal/ventral pattern formation"/>
    <property type="evidence" value="ECO:0007669"/>
    <property type="project" value="Ensembl"/>
</dbReference>
<dbReference type="GO" id="GO:0042756">
    <property type="term" value="P:drinking behavior"/>
    <property type="evidence" value="ECO:0007669"/>
    <property type="project" value="Ensembl"/>
</dbReference>
<dbReference type="GO" id="GO:1990403">
    <property type="term" value="P:embryonic brain development"/>
    <property type="evidence" value="ECO:0007669"/>
    <property type="project" value="Ensembl"/>
</dbReference>
<dbReference type="GO" id="GO:0035115">
    <property type="term" value="P:embryonic forelimb morphogenesis"/>
    <property type="evidence" value="ECO:0007669"/>
    <property type="project" value="Ensembl"/>
</dbReference>
<dbReference type="GO" id="GO:0030901">
    <property type="term" value="P:midbrain development"/>
    <property type="evidence" value="ECO:0007669"/>
    <property type="project" value="Ensembl"/>
</dbReference>
<dbReference type="GO" id="GO:0030917">
    <property type="term" value="P:midbrain-hindbrain boundary development"/>
    <property type="evidence" value="ECO:0007669"/>
    <property type="project" value="Ensembl"/>
</dbReference>
<dbReference type="GO" id="GO:0061743">
    <property type="term" value="P:motor learning"/>
    <property type="evidence" value="ECO:0007669"/>
    <property type="project" value="Ensembl"/>
</dbReference>
<dbReference type="GO" id="GO:0035264">
    <property type="term" value="P:multicellular organism growth"/>
    <property type="evidence" value="ECO:0007669"/>
    <property type="project" value="Ensembl"/>
</dbReference>
<dbReference type="GO" id="GO:0043524">
    <property type="term" value="P:negative regulation of neuron apoptotic process"/>
    <property type="evidence" value="ECO:0007669"/>
    <property type="project" value="Ensembl"/>
</dbReference>
<dbReference type="GO" id="GO:0000122">
    <property type="term" value="P:negative regulation of transcription by RNA polymerase II"/>
    <property type="evidence" value="ECO:0000314"/>
    <property type="project" value="NTNU_SB"/>
</dbReference>
<dbReference type="GO" id="GO:0048666">
    <property type="term" value="P:neuron development"/>
    <property type="evidence" value="ECO:0007669"/>
    <property type="project" value="Ensembl"/>
</dbReference>
<dbReference type="GO" id="GO:0043473">
    <property type="term" value="P:pigmentation"/>
    <property type="evidence" value="ECO:0007669"/>
    <property type="project" value="Ensembl"/>
</dbReference>
<dbReference type="GO" id="GO:0045944">
    <property type="term" value="P:positive regulation of transcription by RNA polymerase II"/>
    <property type="evidence" value="ECO:0007669"/>
    <property type="project" value="Ensembl"/>
</dbReference>
<dbReference type="GO" id="GO:0009954">
    <property type="term" value="P:proximal/distal pattern formation"/>
    <property type="evidence" value="ECO:0007669"/>
    <property type="project" value="Ensembl"/>
</dbReference>
<dbReference type="GO" id="GO:0006357">
    <property type="term" value="P:regulation of transcription by RNA polymerase II"/>
    <property type="evidence" value="ECO:0000318"/>
    <property type="project" value="GO_Central"/>
</dbReference>
<dbReference type="GO" id="GO:0042220">
    <property type="term" value="P:response to cocaine"/>
    <property type="evidence" value="ECO:0007669"/>
    <property type="project" value="Ensembl"/>
</dbReference>
<dbReference type="GO" id="GO:0001501">
    <property type="term" value="P:skeletal system development"/>
    <property type="evidence" value="ECO:0000304"/>
    <property type="project" value="ProtInc"/>
</dbReference>
<dbReference type="GO" id="GO:0035176">
    <property type="term" value="P:social behavior"/>
    <property type="evidence" value="ECO:0007669"/>
    <property type="project" value="Ensembl"/>
</dbReference>
<dbReference type="CDD" id="cd00086">
    <property type="entry name" value="homeodomain"/>
    <property type="match status" value="1"/>
</dbReference>
<dbReference type="FunFam" id="1.10.10.60:FF:000167">
    <property type="entry name" value="Homeobox protein engrailed-like"/>
    <property type="match status" value="1"/>
</dbReference>
<dbReference type="Gene3D" id="1.10.10.60">
    <property type="entry name" value="Homeodomain-like"/>
    <property type="match status" value="1"/>
</dbReference>
<dbReference type="InterPro" id="IPR050720">
    <property type="entry name" value="Engrailed_Homeobox_TFs"/>
</dbReference>
<dbReference type="InterPro" id="IPR001356">
    <property type="entry name" value="HD"/>
</dbReference>
<dbReference type="InterPro" id="IPR000747">
    <property type="entry name" value="HD_engrailed"/>
</dbReference>
<dbReference type="InterPro" id="IPR020479">
    <property type="entry name" value="HD_metazoa"/>
</dbReference>
<dbReference type="InterPro" id="IPR019549">
    <property type="entry name" value="Homeobox-engrailed_C-terminal"/>
</dbReference>
<dbReference type="InterPro" id="IPR019737">
    <property type="entry name" value="Homeobox-engrailed_CS"/>
</dbReference>
<dbReference type="InterPro" id="IPR017970">
    <property type="entry name" value="Homeobox_CS"/>
</dbReference>
<dbReference type="InterPro" id="IPR009057">
    <property type="entry name" value="Homeodomain-like_sf"/>
</dbReference>
<dbReference type="PANTHER" id="PTHR24341">
    <property type="entry name" value="HOMEOBOX PROTEIN ENGRAILED"/>
    <property type="match status" value="1"/>
</dbReference>
<dbReference type="PANTHER" id="PTHR24341:SF4">
    <property type="entry name" value="HOMEOBOX PROTEIN ENGRAILED-1"/>
    <property type="match status" value="1"/>
</dbReference>
<dbReference type="Pfam" id="PF10525">
    <property type="entry name" value="Engrail_1_C_sig"/>
    <property type="match status" value="1"/>
</dbReference>
<dbReference type="Pfam" id="PF00046">
    <property type="entry name" value="Homeodomain"/>
    <property type="match status" value="1"/>
</dbReference>
<dbReference type="PRINTS" id="PR00026">
    <property type="entry name" value="ENGRAILED"/>
</dbReference>
<dbReference type="PRINTS" id="PR00024">
    <property type="entry name" value="HOMEOBOX"/>
</dbReference>
<dbReference type="SMART" id="SM00389">
    <property type="entry name" value="HOX"/>
    <property type="match status" value="1"/>
</dbReference>
<dbReference type="SUPFAM" id="SSF46689">
    <property type="entry name" value="Homeodomain-like"/>
    <property type="match status" value="1"/>
</dbReference>
<dbReference type="PROSITE" id="PS00033">
    <property type="entry name" value="ENGRAILED"/>
    <property type="match status" value="1"/>
</dbReference>
<dbReference type="PROSITE" id="PS00027">
    <property type="entry name" value="HOMEOBOX_1"/>
    <property type="match status" value="1"/>
</dbReference>
<dbReference type="PROSITE" id="PS50071">
    <property type="entry name" value="HOMEOBOX_2"/>
    <property type="match status" value="1"/>
</dbReference>
<protein>
    <recommendedName>
        <fullName>Homeobox protein engrailed-1</fullName>
        <shortName>Homeobox protein en-1</shortName>
        <shortName>Hu-En-1</shortName>
    </recommendedName>
</protein>
<feature type="chain" id="PRO_0000196062" description="Homeobox protein engrailed-1">
    <location>
        <begin position="1"/>
        <end position="392"/>
    </location>
</feature>
<feature type="DNA-binding region" description="Homeobox" evidence="2">
    <location>
        <begin position="303"/>
        <end position="362"/>
    </location>
</feature>
<feature type="region of interest" description="Disordered" evidence="3">
    <location>
        <begin position="1"/>
        <end position="100"/>
    </location>
</feature>
<feature type="region of interest" description="Disordered" evidence="3">
    <location>
        <begin position="132"/>
        <end position="164"/>
    </location>
</feature>
<feature type="region of interest" description="Disordered" evidence="3">
    <location>
        <begin position="219"/>
        <end position="251"/>
    </location>
</feature>
<feature type="region of interest" description="Disordered" evidence="3">
    <location>
        <begin position="282"/>
        <end position="306"/>
    </location>
</feature>
<feature type="compositionally biased region" description="Low complexity" evidence="3">
    <location>
        <begin position="14"/>
        <end position="36"/>
    </location>
</feature>
<feature type="compositionally biased region" description="Pro residues" evidence="3">
    <location>
        <begin position="51"/>
        <end position="66"/>
    </location>
</feature>
<feature type="compositionally biased region" description="Pro residues" evidence="3">
    <location>
        <begin position="75"/>
        <end position="84"/>
    </location>
</feature>
<feature type="compositionally biased region" description="Low complexity" evidence="3">
    <location>
        <begin position="85"/>
        <end position="100"/>
    </location>
</feature>
<feature type="compositionally biased region" description="Gly residues" evidence="3">
    <location>
        <begin position="223"/>
        <end position="236"/>
    </location>
</feature>
<feature type="sequence conflict" description="In Ref. 1; AAA53502." evidence="5" ref="1">
    <original>A</original>
    <variation>G</variation>
    <location>
        <position position="18"/>
    </location>
</feature>
<name>HME1_HUMAN</name>
<evidence type="ECO:0000250" key="1">
    <source>
        <dbReference type="UniProtKB" id="P09065"/>
    </source>
</evidence>
<evidence type="ECO:0000255" key="2">
    <source>
        <dbReference type="PROSITE-ProRule" id="PRU00108"/>
    </source>
</evidence>
<evidence type="ECO:0000256" key="3">
    <source>
        <dbReference type="SAM" id="MobiDB-lite"/>
    </source>
</evidence>
<evidence type="ECO:0000269" key="4">
    <source>
    </source>
</evidence>
<evidence type="ECO:0000305" key="5"/>
<sequence>MEEQQPEPKSQRDSALGAAAAATPGGLSLSLSPGASGSSGSGSDGDSVPVSPQPAPPSPPAAPCLPPLAHHPHLPPHPPPPPPQHLAAPAHQPQPAAQLHRTTNFFIDNILRPDFGCKKEQPPPQLLVAAAARGGAGGGGRVERDRGQTAAGRDPVHPLGTRAPGAASLLCAPDANCGPPDGSQPAAAGAGASKAGNPAAAAAAAAAAVAAAAAAAAAKPSDTGGGGSGGGAGSPGAQGTKYPEHGNPAILLMGSANGGPVVKTDSQQPLVWPAWVYCTRYSDRPSSGPRTRKLKKKKNEKEDKRPRTAFTAEQLQRLKAEFQANRYITEQRRQTLAQELSLNESQIKIWFQNKRAKIKKATGIKNGLALHLMAQGLYNHSTTTVQDKDESE</sequence>
<reference key="1">
    <citation type="journal article" date="1992" name="Dev. Genet.">
        <title>Cloning and sequence comparison of the mouse, human, and chicken engrailed genes reveal potential functional domains and regulatory regions.</title>
        <authorList>
            <person name="Logan C."/>
            <person name="Hanks M.C."/>
            <person name="Noble-Topham S."/>
            <person name="Nallainathan D."/>
            <person name="Provart N.J."/>
            <person name="Joyner A.L."/>
        </authorList>
    </citation>
    <scope>NUCLEOTIDE SEQUENCE [GENOMIC DNA]</scope>
</reference>
<reference key="2">
    <citation type="submission" date="2000-04" db="EMBL/GenBank/DDBJ databases">
        <authorList>
            <person name="Logan C."/>
            <person name="Hanks M.C."/>
            <person name="Noble-Topham S."/>
            <person name="Nallainathan D."/>
            <person name="Provart N.J."/>
            <person name="Joyner A.L."/>
        </authorList>
    </citation>
    <scope>SEQUENCE REVISION TO 288</scope>
</reference>
<reference key="3">
    <citation type="journal article" date="2005" name="Nature">
        <title>Generation and annotation of the DNA sequences of human chromosomes 2 and 4.</title>
        <authorList>
            <person name="Hillier L.W."/>
            <person name="Graves T.A."/>
            <person name="Fulton R.S."/>
            <person name="Fulton L.A."/>
            <person name="Pepin K.H."/>
            <person name="Minx P."/>
            <person name="Wagner-McPherson C."/>
            <person name="Layman D."/>
            <person name="Wylie K."/>
            <person name="Sekhon M."/>
            <person name="Becker M.C."/>
            <person name="Fewell G.A."/>
            <person name="Delehaunty K.D."/>
            <person name="Miner T.L."/>
            <person name="Nash W.E."/>
            <person name="Kremitzki C."/>
            <person name="Oddy L."/>
            <person name="Du H."/>
            <person name="Sun H."/>
            <person name="Bradshaw-Cordum H."/>
            <person name="Ali J."/>
            <person name="Carter J."/>
            <person name="Cordes M."/>
            <person name="Harris A."/>
            <person name="Isak A."/>
            <person name="van Brunt A."/>
            <person name="Nguyen C."/>
            <person name="Du F."/>
            <person name="Courtney L."/>
            <person name="Kalicki J."/>
            <person name="Ozersky P."/>
            <person name="Abbott S."/>
            <person name="Armstrong J."/>
            <person name="Belter E.A."/>
            <person name="Caruso L."/>
            <person name="Cedroni M."/>
            <person name="Cotton M."/>
            <person name="Davidson T."/>
            <person name="Desai A."/>
            <person name="Elliott G."/>
            <person name="Erb T."/>
            <person name="Fronick C."/>
            <person name="Gaige T."/>
            <person name="Haakenson W."/>
            <person name="Haglund K."/>
            <person name="Holmes A."/>
            <person name="Harkins R."/>
            <person name="Kim K."/>
            <person name="Kruchowski S.S."/>
            <person name="Strong C.M."/>
            <person name="Grewal N."/>
            <person name="Goyea E."/>
            <person name="Hou S."/>
            <person name="Levy A."/>
            <person name="Martinka S."/>
            <person name="Mead K."/>
            <person name="McLellan M.D."/>
            <person name="Meyer R."/>
            <person name="Randall-Maher J."/>
            <person name="Tomlinson C."/>
            <person name="Dauphin-Kohlberg S."/>
            <person name="Kozlowicz-Reilly A."/>
            <person name="Shah N."/>
            <person name="Swearengen-Shahid S."/>
            <person name="Snider J."/>
            <person name="Strong J.T."/>
            <person name="Thompson J."/>
            <person name="Yoakum M."/>
            <person name="Leonard S."/>
            <person name="Pearman C."/>
            <person name="Trani L."/>
            <person name="Radionenko M."/>
            <person name="Waligorski J.E."/>
            <person name="Wang C."/>
            <person name="Rock S.M."/>
            <person name="Tin-Wollam A.-M."/>
            <person name="Maupin R."/>
            <person name="Latreille P."/>
            <person name="Wendl M.C."/>
            <person name="Yang S.-P."/>
            <person name="Pohl C."/>
            <person name="Wallis J.W."/>
            <person name="Spieth J."/>
            <person name="Bieri T.A."/>
            <person name="Berkowicz N."/>
            <person name="Nelson J.O."/>
            <person name="Osborne J."/>
            <person name="Ding L."/>
            <person name="Meyer R."/>
            <person name="Sabo A."/>
            <person name="Shotland Y."/>
            <person name="Sinha P."/>
            <person name="Wohldmann P.E."/>
            <person name="Cook L.L."/>
            <person name="Hickenbotham M.T."/>
            <person name="Eldred J."/>
            <person name="Williams D."/>
            <person name="Jones T.A."/>
            <person name="She X."/>
            <person name="Ciccarelli F.D."/>
            <person name="Izaurralde E."/>
            <person name="Taylor J."/>
            <person name="Schmutz J."/>
            <person name="Myers R.M."/>
            <person name="Cox D.R."/>
            <person name="Huang X."/>
            <person name="McPherson J.D."/>
            <person name="Mardis E.R."/>
            <person name="Clifton S.W."/>
            <person name="Warren W.C."/>
            <person name="Chinwalla A.T."/>
            <person name="Eddy S.R."/>
            <person name="Marra M.A."/>
            <person name="Ovcharenko I."/>
            <person name="Furey T.S."/>
            <person name="Miller W."/>
            <person name="Eichler E.E."/>
            <person name="Bork P."/>
            <person name="Suyama M."/>
            <person name="Torrents D."/>
            <person name="Waterston R.H."/>
            <person name="Wilson R.K."/>
        </authorList>
    </citation>
    <scope>NUCLEOTIDE SEQUENCE [LARGE SCALE GENOMIC DNA]</scope>
</reference>
<reference key="4">
    <citation type="submission" date="2005-07" db="EMBL/GenBank/DDBJ databases">
        <authorList>
            <person name="Mural R.J."/>
            <person name="Istrail S."/>
            <person name="Sutton G.G."/>
            <person name="Florea L."/>
            <person name="Halpern A.L."/>
            <person name="Mobarry C.M."/>
            <person name="Lippert R."/>
            <person name="Walenz B."/>
            <person name="Shatkay H."/>
            <person name="Dew I."/>
            <person name="Miller J.R."/>
            <person name="Flanigan M.J."/>
            <person name="Edwards N.J."/>
            <person name="Bolanos R."/>
            <person name="Fasulo D."/>
            <person name="Halldorsson B.V."/>
            <person name="Hannenhalli S."/>
            <person name="Turner R."/>
            <person name="Yooseph S."/>
            <person name="Lu F."/>
            <person name="Nusskern D.R."/>
            <person name="Shue B.C."/>
            <person name="Zheng X.H."/>
            <person name="Zhong F."/>
            <person name="Delcher A.L."/>
            <person name="Huson D.H."/>
            <person name="Kravitz S.A."/>
            <person name="Mouchard L."/>
            <person name="Reinert K."/>
            <person name="Remington K.A."/>
            <person name="Clark A.G."/>
            <person name="Waterman M.S."/>
            <person name="Eichler E.E."/>
            <person name="Adams M.D."/>
            <person name="Hunkapiller M.W."/>
            <person name="Myers E.W."/>
            <person name="Venter J.C."/>
        </authorList>
    </citation>
    <scope>NUCLEOTIDE SEQUENCE [LARGE SCALE GENOMIC DNA]</scope>
</reference>
<reference key="5">
    <citation type="journal article" date="2021" name="Nature">
        <title>Non-coding deletions identify Maenli lncRNA as a limb-specific En1 regulator.</title>
        <authorList>
            <person name="Allou L."/>
            <person name="Balzano S."/>
            <person name="Magg A."/>
            <person name="Quinodoz M."/>
            <person name="Royer-Bertrand B."/>
            <person name="Schoepflin R."/>
            <person name="Chan W.L."/>
            <person name="Speck-Martins C.E."/>
            <person name="Carvalho D.R."/>
            <person name="Farage L."/>
            <person name="Lourenco C.M."/>
            <person name="Albuquerque R."/>
            <person name="Rajagopal S."/>
            <person name="Nampoothiri S."/>
            <person name="Campos-Xavier B."/>
            <person name="Chiesa C."/>
            <person name="Niel-Buetschi F."/>
            <person name="Wittler L."/>
            <person name="Timmermann B."/>
            <person name="Spielmann M."/>
            <person name="Robson M.I."/>
            <person name="Ringel A."/>
            <person name="Heinrich V."/>
            <person name="Cova G."/>
            <person name="Andrey G."/>
            <person name="Prada-Medina C.A."/>
            <person name="Pescini-Gobert R."/>
            <person name="Unger S."/>
            <person name="Bonafe L."/>
            <person name="Grote P."/>
            <person name="Rivolta C."/>
            <person name="Mundlos S."/>
            <person name="Superti-Furga A."/>
        </authorList>
    </citation>
    <scope>INVOLVEMENT IN ENDOVESL AND ENDOVESLB</scope>
</reference>
<comment type="function">
    <text evidence="1">Required for proper formation of the apical ectodermal ridge and correct dorsal-ventral patterning in the limb.</text>
</comment>
<comment type="subcellular location">
    <subcellularLocation>
        <location>Nucleus</location>
    </subcellularLocation>
</comment>
<comment type="disease" evidence="4">
    <disease id="DI-06036">
        <name>ENDOVE syndrome, limb-only type</name>
        <acronym>ENDOVESL</acronym>
        <description>An autosomal recessive disorder characterized by severe shortening and deformation of the legs and feet, 3/4 syndactyly of the hands, and toenails partially displaced to plantar surface. Radiographs show normal femora but severely shortened tibiae, triangular fibulae and malformed or absent bones in the feet. In addition, genitourinary anomalies have been observed.</description>
        <dbReference type="MIM" id="619217"/>
    </disease>
    <text evidence="4">The gene represented in this entry is involved in disease pathogenesis. Homozygous structural variants on chromosome 2 located 300 kb upstream of EN1 result in altered EN1 expression with pathological consequences.</text>
</comment>
<comment type="disease" evidence="4">
    <disease id="DI-06037">
        <name>ENDOVE syndrome, limb-brain type</name>
        <acronym>ENDOVESLB</acronym>
        <description>An autosomal recessive disorder characterized by marked mesomelic shortening of the lower limbs, severe hypoplasia of the tibia and fibula, absent talus, and rudimentary and short foot bones. Hands show short and malformed fingers with a missing digit, and nails are absent on some fingers. Affected individuals manifest neurologic symptoms including seizures and generalized hypotonia. Brain imaging reveals absence of the cerebellum and hypoplasia of the brain stem.</description>
        <dbReference type="MIM" id="619218"/>
    </disease>
    <text>The disease is caused by variants affecting the gene represented in this entry.</text>
</comment>
<comment type="similarity">
    <text evidence="5">Belongs to the engrailed homeobox family.</text>
</comment>
<accession>Q05925</accession>
<accession>Q4ZG44</accession>
<organism>
    <name type="scientific">Homo sapiens</name>
    <name type="common">Human</name>
    <dbReference type="NCBI Taxonomy" id="9606"/>
    <lineage>
        <taxon>Eukaryota</taxon>
        <taxon>Metazoa</taxon>
        <taxon>Chordata</taxon>
        <taxon>Craniata</taxon>
        <taxon>Vertebrata</taxon>
        <taxon>Euteleostomi</taxon>
        <taxon>Mammalia</taxon>
        <taxon>Eutheria</taxon>
        <taxon>Euarchontoglires</taxon>
        <taxon>Primates</taxon>
        <taxon>Haplorrhini</taxon>
        <taxon>Catarrhini</taxon>
        <taxon>Hominidae</taxon>
        <taxon>Homo</taxon>
    </lineage>
</organism>
<keyword id="KW-0217">Developmental protein</keyword>
<keyword id="KW-0238">DNA-binding</keyword>
<keyword id="KW-0242">Dwarfism</keyword>
<keyword id="KW-0371">Homeobox</keyword>
<keyword id="KW-0539">Nucleus</keyword>
<keyword id="KW-1267">Proteomics identification</keyword>
<keyword id="KW-1185">Reference proteome</keyword>